<name>YQJI_SHIFL</name>
<organism>
    <name type="scientific">Shigella flexneri</name>
    <dbReference type="NCBI Taxonomy" id="623"/>
    <lineage>
        <taxon>Bacteria</taxon>
        <taxon>Pseudomonadati</taxon>
        <taxon>Pseudomonadota</taxon>
        <taxon>Gammaproteobacteria</taxon>
        <taxon>Enterobacterales</taxon>
        <taxon>Enterobacteriaceae</taxon>
        <taxon>Shigella</taxon>
    </lineage>
</organism>
<reference key="1">
    <citation type="journal article" date="2002" name="Nucleic Acids Res.">
        <title>Genome sequence of Shigella flexneri 2a: insights into pathogenicity through comparison with genomes of Escherichia coli K12 and O157.</title>
        <authorList>
            <person name="Jin Q."/>
            <person name="Yuan Z."/>
            <person name="Xu J."/>
            <person name="Wang Y."/>
            <person name="Shen Y."/>
            <person name="Lu W."/>
            <person name="Wang J."/>
            <person name="Liu H."/>
            <person name="Yang J."/>
            <person name="Yang F."/>
            <person name="Zhang X."/>
            <person name="Zhang J."/>
            <person name="Yang G."/>
            <person name="Wu H."/>
            <person name="Qu D."/>
            <person name="Dong J."/>
            <person name="Sun L."/>
            <person name="Xue Y."/>
            <person name="Zhao A."/>
            <person name="Gao Y."/>
            <person name="Zhu J."/>
            <person name="Kan B."/>
            <person name="Ding K."/>
            <person name="Chen S."/>
            <person name="Cheng H."/>
            <person name="Yao Z."/>
            <person name="He B."/>
            <person name="Chen R."/>
            <person name="Ma D."/>
            <person name="Qiang B."/>
            <person name="Wen Y."/>
            <person name="Hou Y."/>
            <person name="Yu J."/>
        </authorList>
    </citation>
    <scope>NUCLEOTIDE SEQUENCE [LARGE SCALE GENOMIC DNA]</scope>
    <source>
        <strain>301 / Serotype 2a</strain>
    </source>
</reference>
<reference key="2">
    <citation type="journal article" date="2003" name="Infect. Immun.">
        <title>Complete genome sequence and comparative genomics of Shigella flexneri serotype 2a strain 2457T.</title>
        <authorList>
            <person name="Wei J."/>
            <person name="Goldberg M.B."/>
            <person name="Burland V."/>
            <person name="Venkatesan M.M."/>
            <person name="Deng W."/>
            <person name="Fournier G."/>
            <person name="Mayhew G.F."/>
            <person name="Plunkett G. III"/>
            <person name="Rose D.J."/>
            <person name="Darling A."/>
            <person name="Mau B."/>
            <person name="Perna N.T."/>
            <person name="Payne S.M."/>
            <person name="Runyen-Janecky L.J."/>
            <person name="Zhou S."/>
            <person name="Schwartz D.C."/>
            <person name="Blattner F.R."/>
        </authorList>
    </citation>
    <scope>NUCLEOTIDE SEQUENCE [LARGE SCALE GENOMIC DNA]</scope>
    <source>
        <strain>ATCC 700930 / 2457T / Serotype 2a</strain>
    </source>
</reference>
<accession>P64589</accession>
<accession>Q46872</accession>
<gene>
    <name type="primary">yqjI</name>
    <name type="ordered locus">SF3112</name>
    <name type="ordered locus">S3318</name>
</gene>
<evidence type="ECO:0000256" key="1">
    <source>
        <dbReference type="SAM" id="MobiDB-lite"/>
    </source>
</evidence>
<feature type="chain" id="PRO_0000169439" description="Uncharacterized protein YqjI">
    <location>
        <begin position="1"/>
        <end position="207"/>
    </location>
</feature>
<feature type="region of interest" description="Disordered" evidence="1">
    <location>
        <begin position="1"/>
        <end position="46"/>
    </location>
</feature>
<feature type="compositionally biased region" description="Basic and acidic residues" evidence="1">
    <location>
        <begin position="1"/>
        <end position="40"/>
    </location>
</feature>
<proteinExistence type="predicted"/>
<protein>
    <recommendedName>
        <fullName>Uncharacterized protein YqjI</fullName>
    </recommendedName>
</protein>
<dbReference type="EMBL" id="AE005674">
    <property type="protein sequence ID" value="AAN44586.1"/>
    <property type="molecule type" value="Genomic_DNA"/>
</dbReference>
<dbReference type="EMBL" id="AE014073">
    <property type="protein sequence ID" value="AAP18398.1"/>
    <property type="molecule type" value="Genomic_DNA"/>
</dbReference>
<dbReference type="RefSeq" id="NP_708879.1">
    <property type="nucleotide sequence ID" value="NC_004337.2"/>
</dbReference>
<dbReference type="RefSeq" id="WP_000018003.1">
    <property type="nucleotide sequence ID" value="NZ_WPGW01000031.1"/>
</dbReference>
<dbReference type="SMR" id="P64589"/>
<dbReference type="STRING" id="198214.SF3112"/>
<dbReference type="PaxDb" id="198214-SF3112"/>
<dbReference type="GeneID" id="1023574"/>
<dbReference type="KEGG" id="sfl:SF3112"/>
<dbReference type="KEGG" id="sfx:S3318"/>
<dbReference type="PATRIC" id="fig|198214.7.peg.3694"/>
<dbReference type="HOGENOM" id="CLU_063440_1_0_6"/>
<dbReference type="Proteomes" id="UP000001006">
    <property type="component" value="Chromosome"/>
</dbReference>
<dbReference type="Proteomes" id="UP000002673">
    <property type="component" value="Chromosome"/>
</dbReference>
<dbReference type="Gene3D" id="1.10.10.10">
    <property type="entry name" value="Winged helix-like DNA-binding domain superfamily/Winged helix DNA-binding domain"/>
    <property type="match status" value="1"/>
</dbReference>
<dbReference type="InterPro" id="IPR005149">
    <property type="entry name" value="Tscrpt_reg_PadR_N"/>
</dbReference>
<dbReference type="InterPro" id="IPR036388">
    <property type="entry name" value="WH-like_DNA-bd_sf"/>
</dbReference>
<dbReference type="InterPro" id="IPR036390">
    <property type="entry name" value="WH_DNA-bd_sf"/>
</dbReference>
<dbReference type="PANTHER" id="PTHR43252">
    <property type="entry name" value="TRANSCRIPTIONAL REGULATOR YQJI"/>
    <property type="match status" value="1"/>
</dbReference>
<dbReference type="PANTHER" id="PTHR43252:SF7">
    <property type="entry name" value="TRANSCRIPTIONAL REGULATOR YQJI"/>
    <property type="match status" value="1"/>
</dbReference>
<dbReference type="Pfam" id="PF03551">
    <property type="entry name" value="PadR"/>
    <property type="match status" value="1"/>
</dbReference>
<dbReference type="SUPFAM" id="SSF46785">
    <property type="entry name" value="Winged helix' DNA-binding domain"/>
    <property type="match status" value="1"/>
</dbReference>
<sequence>MSHHHEGCCKHEGQPRHEGCCKGEKSEHEHCGHGHQHEHGQCCGGRHGRGGGRRQRFFGHGELRLVILDILSRDDSHGYELIKAIENLTQGNYTPSPGVIYPTLDFLQEQSLITIREEEGGKKQIALTEQGAQWLEENREQVEMIEERIKARCVGAALRQNPQMKRALDNFKAVLDLRVNQSDISDAQIKKIIAVIDRAAFDITQLD</sequence>
<keyword id="KW-1185">Reference proteome</keyword>